<comment type="function">
    <text evidence="1">Binds to the 23S rRNA.</text>
</comment>
<comment type="subunit">
    <text evidence="1">Part of the 50S ribosomal subunit.</text>
</comment>
<comment type="similarity">
    <text evidence="1">Belongs to the universal ribosomal protein uL15 family.</text>
</comment>
<reference key="1">
    <citation type="journal article" date="2006" name="Proc. Natl. Acad. Sci. U.S.A.">
        <title>Burkholderia xenovorans LB400 harbors a multi-replicon, 9.73-Mbp genome shaped for versatility.</title>
        <authorList>
            <person name="Chain P.S.G."/>
            <person name="Denef V.J."/>
            <person name="Konstantinidis K.T."/>
            <person name="Vergez L.M."/>
            <person name="Agullo L."/>
            <person name="Reyes V.L."/>
            <person name="Hauser L."/>
            <person name="Cordova M."/>
            <person name="Gomez L."/>
            <person name="Gonzalez M."/>
            <person name="Land M."/>
            <person name="Lao V."/>
            <person name="Larimer F."/>
            <person name="LiPuma J.J."/>
            <person name="Mahenthiralingam E."/>
            <person name="Malfatti S.A."/>
            <person name="Marx C.J."/>
            <person name="Parnell J.J."/>
            <person name="Ramette A."/>
            <person name="Richardson P."/>
            <person name="Seeger M."/>
            <person name="Smith D."/>
            <person name="Spilker T."/>
            <person name="Sul W.J."/>
            <person name="Tsoi T.V."/>
            <person name="Ulrich L.E."/>
            <person name="Zhulin I.B."/>
            <person name="Tiedje J.M."/>
        </authorList>
    </citation>
    <scope>NUCLEOTIDE SEQUENCE [LARGE SCALE GENOMIC DNA]</scope>
    <source>
        <strain>LB400</strain>
    </source>
</reference>
<evidence type="ECO:0000255" key="1">
    <source>
        <dbReference type="HAMAP-Rule" id="MF_01341"/>
    </source>
</evidence>
<evidence type="ECO:0000256" key="2">
    <source>
        <dbReference type="SAM" id="MobiDB-lite"/>
    </source>
</evidence>
<evidence type="ECO:0000305" key="3"/>
<name>RL15_PARXL</name>
<accession>Q13TI9</accession>
<keyword id="KW-1185">Reference proteome</keyword>
<keyword id="KW-0687">Ribonucleoprotein</keyword>
<keyword id="KW-0689">Ribosomal protein</keyword>
<keyword id="KW-0694">RNA-binding</keyword>
<keyword id="KW-0699">rRNA-binding</keyword>
<organism>
    <name type="scientific">Paraburkholderia xenovorans (strain LB400)</name>
    <dbReference type="NCBI Taxonomy" id="266265"/>
    <lineage>
        <taxon>Bacteria</taxon>
        <taxon>Pseudomonadati</taxon>
        <taxon>Pseudomonadota</taxon>
        <taxon>Betaproteobacteria</taxon>
        <taxon>Burkholderiales</taxon>
        <taxon>Burkholderiaceae</taxon>
        <taxon>Paraburkholderia</taxon>
    </lineage>
</organism>
<sequence>MELNNLKPAEGAKHAKRRVGRGIGSGLGKTAGRGHKGQKSRSGGFHKVGFEGGQMPLQRRLPKRGFTSLTKEFVGEVRLSDLEKLPVDEIDLLALKQAGLVGELIKSAKIIATGELKRKVVVKGLGATKGARAAIEAAGGSFAE</sequence>
<protein>
    <recommendedName>
        <fullName evidence="1">Large ribosomal subunit protein uL15</fullName>
    </recommendedName>
    <alternativeName>
        <fullName evidence="3">50S ribosomal protein L15</fullName>
    </alternativeName>
</protein>
<proteinExistence type="inferred from homology"/>
<feature type="chain" id="PRO_0000251497" description="Large ribosomal subunit protein uL15">
    <location>
        <begin position="1"/>
        <end position="144"/>
    </location>
</feature>
<feature type="region of interest" description="Disordered" evidence="2">
    <location>
        <begin position="1"/>
        <end position="57"/>
    </location>
</feature>
<feature type="compositionally biased region" description="Gly residues" evidence="2">
    <location>
        <begin position="21"/>
        <end position="31"/>
    </location>
</feature>
<dbReference type="EMBL" id="CP000270">
    <property type="protein sequence ID" value="ABE32600.1"/>
    <property type="molecule type" value="Genomic_DNA"/>
</dbReference>
<dbReference type="RefSeq" id="WP_011490050.1">
    <property type="nucleotide sequence ID" value="NZ_CP008760.1"/>
</dbReference>
<dbReference type="SMR" id="Q13TI9"/>
<dbReference type="STRING" id="266265.Bxe_A0333"/>
<dbReference type="KEGG" id="bxb:DR64_2503"/>
<dbReference type="KEGG" id="bxe:Bxe_A0333"/>
<dbReference type="eggNOG" id="COG0200">
    <property type="taxonomic scope" value="Bacteria"/>
</dbReference>
<dbReference type="OrthoDB" id="9810293at2"/>
<dbReference type="Proteomes" id="UP000001817">
    <property type="component" value="Chromosome 1"/>
</dbReference>
<dbReference type="GO" id="GO:0022625">
    <property type="term" value="C:cytosolic large ribosomal subunit"/>
    <property type="evidence" value="ECO:0007669"/>
    <property type="project" value="TreeGrafter"/>
</dbReference>
<dbReference type="GO" id="GO:0019843">
    <property type="term" value="F:rRNA binding"/>
    <property type="evidence" value="ECO:0007669"/>
    <property type="project" value="UniProtKB-UniRule"/>
</dbReference>
<dbReference type="GO" id="GO:0003735">
    <property type="term" value="F:structural constituent of ribosome"/>
    <property type="evidence" value="ECO:0007669"/>
    <property type="project" value="InterPro"/>
</dbReference>
<dbReference type="GO" id="GO:0006412">
    <property type="term" value="P:translation"/>
    <property type="evidence" value="ECO:0007669"/>
    <property type="project" value="UniProtKB-UniRule"/>
</dbReference>
<dbReference type="Gene3D" id="3.100.10.10">
    <property type="match status" value="1"/>
</dbReference>
<dbReference type="HAMAP" id="MF_01341">
    <property type="entry name" value="Ribosomal_uL15"/>
    <property type="match status" value="1"/>
</dbReference>
<dbReference type="InterPro" id="IPR030878">
    <property type="entry name" value="Ribosomal_uL15"/>
</dbReference>
<dbReference type="InterPro" id="IPR021131">
    <property type="entry name" value="Ribosomal_uL15/eL18"/>
</dbReference>
<dbReference type="InterPro" id="IPR036227">
    <property type="entry name" value="Ribosomal_uL15/eL18_sf"/>
</dbReference>
<dbReference type="InterPro" id="IPR005749">
    <property type="entry name" value="Ribosomal_uL15_bac-type"/>
</dbReference>
<dbReference type="InterPro" id="IPR001196">
    <property type="entry name" value="Ribosomal_uL15_CS"/>
</dbReference>
<dbReference type="NCBIfam" id="TIGR01071">
    <property type="entry name" value="rplO_bact"/>
    <property type="match status" value="1"/>
</dbReference>
<dbReference type="PANTHER" id="PTHR12934">
    <property type="entry name" value="50S RIBOSOMAL PROTEIN L15"/>
    <property type="match status" value="1"/>
</dbReference>
<dbReference type="PANTHER" id="PTHR12934:SF11">
    <property type="entry name" value="LARGE RIBOSOMAL SUBUNIT PROTEIN UL15M"/>
    <property type="match status" value="1"/>
</dbReference>
<dbReference type="Pfam" id="PF00828">
    <property type="entry name" value="Ribosomal_L27A"/>
    <property type="match status" value="1"/>
</dbReference>
<dbReference type="SUPFAM" id="SSF52080">
    <property type="entry name" value="Ribosomal proteins L15p and L18e"/>
    <property type="match status" value="1"/>
</dbReference>
<dbReference type="PROSITE" id="PS00475">
    <property type="entry name" value="RIBOSOMAL_L15"/>
    <property type="match status" value="1"/>
</dbReference>
<gene>
    <name evidence="1" type="primary">rplO</name>
    <name type="ordered locus">Bxeno_A4062</name>
    <name type="ORF">Bxe_A0333</name>
</gene>